<proteinExistence type="evidence at transcript level"/>
<name>HIC2_DANRE</name>
<keyword id="KW-0238">DNA-binding</keyword>
<keyword id="KW-0479">Metal-binding</keyword>
<keyword id="KW-0539">Nucleus</keyword>
<keyword id="KW-1185">Reference proteome</keyword>
<keyword id="KW-0677">Repeat</keyword>
<keyword id="KW-0678">Repressor</keyword>
<keyword id="KW-0804">Transcription</keyword>
<keyword id="KW-0805">Transcription regulation</keyword>
<keyword id="KW-0862">Zinc</keyword>
<keyword id="KW-0863">Zinc-finger</keyword>
<gene>
    <name type="primary">hic2</name>
    <name type="synonym">hrg22</name>
</gene>
<reference evidence="8" key="1">
    <citation type="journal article" date="2001" name="Biochem. Biophys. Res. Commun.">
        <title>Characterization of HRG22, a human homologue of the putative tumor suppressor gene HIC1.</title>
        <authorList>
            <person name="Deltour S."/>
            <person name="Pinte S."/>
            <person name="Guerardel C."/>
            <person name="Leprince D."/>
        </authorList>
    </citation>
    <scope>NUCLEOTIDE SEQUENCE [MRNA]</scope>
    <source>
        <tissue evidence="6">Embryo</tissue>
    </source>
</reference>
<feature type="chain" id="PRO_0000046947" description="Hypermethylated in cancer 2 protein">
    <location>
        <begin position="1"/>
        <end position="560"/>
    </location>
</feature>
<feature type="domain" description="BTB" evidence="3 7">
    <location>
        <begin position="24"/>
        <end position="87"/>
    </location>
</feature>
<feature type="zinc finger region" description="C2H2-type 1" evidence="4 7">
    <location>
        <begin position="387"/>
        <end position="409"/>
    </location>
</feature>
<feature type="zinc finger region" description="C2H2-type 2" evidence="4 7">
    <location>
        <begin position="450"/>
        <end position="472"/>
    </location>
</feature>
<feature type="zinc finger region" description="C2H2-type 3" evidence="4 7">
    <location>
        <begin position="478"/>
        <end position="500"/>
    </location>
</feature>
<feature type="zinc finger region" description="C2H2-type 4" evidence="4 7">
    <location>
        <begin position="506"/>
        <end position="528"/>
    </location>
</feature>
<feature type="zinc finger region" description="C2H2-type 5" evidence="4 7">
    <location>
        <begin position="534"/>
        <end position="556"/>
    </location>
</feature>
<feature type="region of interest" description="Disordered" evidence="5">
    <location>
        <begin position="122"/>
        <end position="163"/>
    </location>
</feature>
<feature type="region of interest" description="Disordered" evidence="5">
    <location>
        <begin position="183"/>
        <end position="367"/>
    </location>
</feature>
<feature type="compositionally biased region" description="Polar residues" evidence="5">
    <location>
        <begin position="126"/>
        <end position="153"/>
    </location>
</feature>
<feature type="compositionally biased region" description="Polar residues" evidence="5">
    <location>
        <begin position="183"/>
        <end position="203"/>
    </location>
</feature>
<feature type="compositionally biased region" description="Low complexity" evidence="5">
    <location>
        <begin position="224"/>
        <end position="242"/>
    </location>
</feature>
<feature type="compositionally biased region" description="Polar residues" evidence="5">
    <location>
        <begin position="243"/>
        <end position="259"/>
    </location>
</feature>
<feature type="compositionally biased region" description="Basic and acidic residues" evidence="5">
    <location>
        <begin position="296"/>
        <end position="308"/>
    </location>
</feature>
<feature type="compositionally biased region" description="Low complexity" evidence="5">
    <location>
        <begin position="348"/>
        <end position="362"/>
    </location>
</feature>
<dbReference type="EMBL" id="AJ307688">
    <property type="protein sequence ID" value="CAC70661.1"/>
    <property type="molecule type" value="mRNA"/>
</dbReference>
<dbReference type="SMR" id="Q90W33"/>
<dbReference type="FunCoup" id="Q90W33">
    <property type="interactions" value="893"/>
</dbReference>
<dbReference type="STRING" id="7955.ENSDARP00000137761"/>
<dbReference type="Ensembl" id="ENSDART00000160046">
    <property type="protein sequence ID" value="ENSDARP00000137761"/>
    <property type="gene ID" value="ENSDARG00000100497"/>
</dbReference>
<dbReference type="Ensembl" id="ENSDART00000183223">
    <property type="protein sequence ID" value="ENSDARP00000150630"/>
    <property type="gene ID" value="ENSDARG00000100497"/>
</dbReference>
<dbReference type="AGR" id="ZFIN:ZDB-GENE-030619-1"/>
<dbReference type="ZFIN" id="ZDB-GENE-030619-1">
    <property type="gene designation" value="hic2"/>
</dbReference>
<dbReference type="HOGENOM" id="CLU_015352_2_0_1"/>
<dbReference type="InParanoid" id="Q90W33"/>
<dbReference type="OMA" id="RNTHCAT"/>
<dbReference type="PhylomeDB" id="Q90W33"/>
<dbReference type="PRO" id="PR:Q90W33"/>
<dbReference type="Proteomes" id="UP000000437">
    <property type="component" value="Unplaced"/>
</dbReference>
<dbReference type="Bgee" id="ENSDARG00000100497">
    <property type="expression patterns" value="Expressed in blastula and 20 other cell types or tissues"/>
</dbReference>
<dbReference type="GO" id="GO:0005634">
    <property type="term" value="C:nucleus"/>
    <property type="evidence" value="ECO:0000318"/>
    <property type="project" value="GO_Central"/>
</dbReference>
<dbReference type="GO" id="GO:0003677">
    <property type="term" value="F:DNA binding"/>
    <property type="evidence" value="ECO:0007669"/>
    <property type="project" value="UniProtKB-KW"/>
</dbReference>
<dbReference type="GO" id="GO:0000981">
    <property type="term" value="F:DNA-binding transcription factor activity, RNA polymerase II-specific"/>
    <property type="evidence" value="ECO:0000318"/>
    <property type="project" value="GO_Central"/>
</dbReference>
<dbReference type="GO" id="GO:0008270">
    <property type="term" value="F:zinc ion binding"/>
    <property type="evidence" value="ECO:0007669"/>
    <property type="project" value="UniProtKB-KW"/>
</dbReference>
<dbReference type="GO" id="GO:0006357">
    <property type="term" value="P:regulation of transcription by RNA polymerase II"/>
    <property type="evidence" value="ECO:0000318"/>
    <property type="project" value="GO_Central"/>
</dbReference>
<dbReference type="CDD" id="cd18334">
    <property type="entry name" value="BTB_POZ_ZBTB30_HIC2"/>
    <property type="match status" value="1"/>
</dbReference>
<dbReference type="FunFam" id="3.30.160.60:FF:000195">
    <property type="entry name" value="Hypermethylated in cancer 1 protein-like"/>
    <property type="match status" value="1"/>
</dbReference>
<dbReference type="FunFam" id="3.30.160.60:FF:003463">
    <property type="entry name" value="Hypermethylated in cancer 2"/>
    <property type="match status" value="1"/>
</dbReference>
<dbReference type="FunFam" id="3.30.160.60:FF:000536">
    <property type="entry name" value="hypermethylated in cancer 2 protein-like"/>
    <property type="match status" value="1"/>
</dbReference>
<dbReference type="FunFam" id="3.30.160.60:FF:000746">
    <property type="entry name" value="hypermethylated in cancer 2 protein-like"/>
    <property type="match status" value="1"/>
</dbReference>
<dbReference type="FunFam" id="3.30.710.10:FF:000032">
    <property type="entry name" value="hypermethylated in cancer 2 protein-like"/>
    <property type="match status" value="1"/>
</dbReference>
<dbReference type="Gene3D" id="3.30.160.60">
    <property type="entry name" value="Classic Zinc Finger"/>
    <property type="match status" value="5"/>
</dbReference>
<dbReference type="Gene3D" id="3.30.710.10">
    <property type="entry name" value="Potassium Channel Kv1.1, Chain A"/>
    <property type="match status" value="1"/>
</dbReference>
<dbReference type="InterPro" id="IPR000210">
    <property type="entry name" value="BTB/POZ_dom"/>
</dbReference>
<dbReference type="InterPro" id="IPR011333">
    <property type="entry name" value="SKP1/BTB/POZ_sf"/>
</dbReference>
<dbReference type="InterPro" id="IPR036236">
    <property type="entry name" value="Znf_C2H2_sf"/>
</dbReference>
<dbReference type="InterPro" id="IPR013087">
    <property type="entry name" value="Znf_C2H2_type"/>
</dbReference>
<dbReference type="PANTHER" id="PTHR24394:SF22">
    <property type="entry name" value="HYPERMETHYLATED IN CANCER 2 PROTEIN"/>
    <property type="match status" value="1"/>
</dbReference>
<dbReference type="PANTHER" id="PTHR24394">
    <property type="entry name" value="ZINC FINGER PROTEIN"/>
    <property type="match status" value="1"/>
</dbReference>
<dbReference type="Pfam" id="PF00651">
    <property type="entry name" value="BTB"/>
    <property type="match status" value="1"/>
</dbReference>
<dbReference type="Pfam" id="PF00096">
    <property type="entry name" value="zf-C2H2"/>
    <property type="match status" value="4"/>
</dbReference>
<dbReference type="SMART" id="SM00225">
    <property type="entry name" value="BTB"/>
    <property type="match status" value="1"/>
</dbReference>
<dbReference type="SMART" id="SM00355">
    <property type="entry name" value="ZnF_C2H2"/>
    <property type="match status" value="5"/>
</dbReference>
<dbReference type="SUPFAM" id="SSF57667">
    <property type="entry name" value="beta-beta-alpha zinc fingers"/>
    <property type="match status" value="3"/>
</dbReference>
<dbReference type="SUPFAM" id="SSF54695">
    <property type="entry name" value="POZ domain"/>
    <property type="match status" value="1"/>
</dbReference>
<dbReference type="PROSITE" id="PS50097">
    <property type="entry name" value="BTB"/>
    <property type="match status" value="1"/>
</dbReference>
<dbReference type="PROSITE" id="PS00028">
    <property type="entry name" value="ZINC_FINGER_C2H2_1"/>
    <property type="match status" value="5"/>
</dbReference>
<dbReference type="PROSITE" id="PS50157">
    <property type="entry name" value="ZINC_FINGER_C2H2_2"/>
    <property type="match status" value="5"/>
</dbReference>
<sequence>MELPNHAKQLLLQLNQQRAKGYLCDVIIVVENALFRAHKNILAASSIYFKSLILHDNLINLDTDMVNPSVFRQVLDFIYTGKLLSSDQFSDHNFNALLTAASYLQLHDLAALCRKKLKRNGRSLLNKPTTPTNGRTSRNQRLSSTPVTPNQMSGLKDSEKTKRHEELIKDDLSEDEMFARNTHCTTSNSLSPSTSKNGSNGSCGMQELGLDLSKKSPSGSTATEEVSPSSIPQESPQSASESTANSASFDENPNTQNLTAGEPMELGVGECEESQPPPDVDQHKSSRQVTRQRRQPKSEGKKGEDMERVTLPNGVSKRLKVAGERLPAGGNGNSEVSFQCKDEEEGLENGQEQSEESGQSENEGGRNSANYVYRQEGFEPALGDNLYVCIPCGKGFPSSEELNAHVETHTEEELYIKEEDDDSYPKEDEVEAEDLSSQITQVHGTETRRFSCSVCNKSYKDPATLRQHEKTHWLTRPFPCNICGKMFTQRGTMTRHMRSHLGLKPFACEECGMRFTRQYRLTEHMRVHSGEKPYECQLCGGKFTQQRNLISHLRMHTSPS</sequence>
<evidence type="ECO:0000250" key="1"/>
<evidence type="ECO:0000250" key="2">
    <source>
        <dbReference type="UniProtKB" id="Q96JB3"/>
    </source>
</evidence>
<evidence type="ECO:0000255" key="3">
    <source>
        <dbReference type="PROSITE-ProRule" id="PRU00037"/>
    </source>
</evidence>
<evidence type="ECO:0000255" key="4">
    <source>
        <dbReference type="PROSITE-ProRule" id="PRU00042"/>
    </source>
</evidence>
<evidence type="ECO:0000256" key="5">
    <source>
        <dbReference type="SAM" id="MobiDB-lite"/>
    </source>
</evidence>
<evidence type="ECO:0000269" key="6">
    <source>
    </source>
</evidence>
<evidence type="ECO:0000305" key="7"/>
<evidence type="ECO:0000312" key="8">
    <source>
        <dbReference type="EMBL" id="CAC70661.1"/>
    </source>
</evidence>
<protein>
    <recommendedName>
        <fullName>Hypermethylated in cancer 2 protein</fullName>
    </recommendedName>
</protein>
<organism evidence="8">
    <name type="scientific">Danio rerio</name>
    <name type="common">Zebrafish</name>
    <name type="synonym">Brachydanio rerio</name>
    <dbReference type="NCBI Taxonomy" id="7955"/>
    <lineage>
        <taxon>Eukaryota</taxon>
        <taxon>Metazoa</taxon>
        <taxon>Chordata</taxon>
        <taxon>Craniata</taxon>
        <taxon>Vertebrata</taxon>
        <taxon>Euteleostomi</taxon>
        <taxon>Actinopterygii</taxon>
        <taxon>Neopterygii</taxon>
        <taxon>Teleostei</taxon>
        <taxon>Ostariophysi</taxon>
        <taxon>Cypriniformes</taxon>
        <taxon>Danionidae</taxon>
        <taxon>Danioninae</taxon>
        <taxon>Danio</taxon>
    </lineage>
</organism>
<accession>Q90W33</accession>
<comment type="function">
    <text evidence="2">Transcriptional repressor.</text>
</comment>
<comment type="subcellular location">
    <subcellularLocation>
        <location evidence="1">Nucleus</location>
    </subcellularLocation>
</comment>
<comment type="similarity">
    <text evidence="7">Belongs to the krueppel C2H2-type zinc-finger protein family. Hic subfamily.</text>
</comment>